<feature type="chain" id="PRO_0000118653" description="NAD(P)H-quinone oxidoreductase subunit J, chloroplastic">
    <location>
        <begin position="1"/>
        <end position="158"/>
    </location>
</feature>
<gene>
    <name evidence="1" type="primary">ndhJ</name>
</gene>
<proteinExistence type="inferred from homology"/>
<dbReference type="EC" id="7.1.1.-" evidence="1"/>
<dbReference type="EMBL" id="AP002983">
    <property type="protein sequence ID" value="BAB33183.1"/>
    <property type="molecule type" value="Genomic_DNA"/>
</dbReference>
<dbReference type="RefSeq" id="NP_084785.1">
    <property type="nucleotide sequence ID" value="NC_002694.1"/>
</dbReference>
<dbReference type="SMR" id="Q9BBT6"/>
<dbReference type="GeneID" id="802942"/>
<dbReference type="OMA" id="NYLQCQG"/>
<dbReference type="GO" id="GO:0009535">
    <property type="term" value="C:chloroplast thylakoid membrane"/>
    <property type="evidence" value="ECO:0007669"/>
    <property type="project" value="UniProtKB-SubCell"/>
</dbReference>
<dbReference type="GO" id="GO:0008137">
    <property type="term" value="F:NADH dehydrogenase (ubiquinone) activity"/>
    <property type="evidence" value="ECO:0007669"/>
    <property type="project" value="InterPro"/>
</dbReference>
<dbReference type="GO" id="GO:0048038">
    <property type="term" value="F:quinone binding"/>
    <property type="evidence" value="ECO:0007669"/>
    <property type="project" value="UniProtKB-KW"/>
</dbReference>
<dbReference type="GO" id="GO:0019684">
    <property type="term" value="P:photosynthesis, light reaction"/>
    <property type="evidence" value="ECO:0007669"/>
    <property type="project" value="UniProtKB-UniRule"/>
</dbReference>
<dbReference type="FunFam" id="3.30.460.80:FF:000004">
    <property type="entry name" value="NAD(P)H-quinone oxidoreductase subunit J, chloroplastic"/>
    <property type="match status" value="1"/>
</dbReference>
<dbReference type="Gene3D" id="3.30.460.80">
    <property type="entry name" value="NADH:ubiquinone oxidoreductase, 30kDa subunit"/>
    <property type="match status" value="1"/>
</dbReference>
<dbReference type="HAMAP" id="MF_01357">
    <property type="entry name" value="NDH1_NuoC"/>
    <property type="match status" value="1"/>
</dbReference>
<dbReference type="InterPro" id="IPR010218">
    <property type="entry name" value="NADH_DH_suC"/>
</dbReference>
<dbReference type="InterPro" id="IPR037232">
    <property type="entry name" value="NADH_quin_OxRdtase_su_C/D-like"/>
</dbReference>
<dbReference type="InterPro" id="IPR001268">
    <property type="entry name" value="NADH_UbQ_OxRdtase_30kDa_su"/>
</dbReference>
<dbReference type="InterPro" id="IPR020396">
    <property type="entry name" value="NADH_UbQ_OxRdtase_CS"/>
</dbReference>
<dbReference type="NCBIfam" id="NF009141">
    <property type="entry name" value="PRK12494.1"/>
    <property type="match status" value="1"/>
</dbReference>
<dbReference type="PANTHER" id="PTHR10884:SF14">
    <property type="entry name" value="NADH DEHYDROGENASE [UBIQUINONE] IRON-SULFUR PROTEIN 3, MITOCHONDRIAL"/>
    <property type="match status" value="1"/>
</dbReference>
<dbReference type="PANTHER" id="PTHR10884">
    <property type="entry name" value="NADH DEHYDROGENASE UBIQUINONE IRON-SULFUR PROTEIN 3"/>
    <property type="match status" value="1"/>
</dbReference>
<dbReference type="Pfam" id="PF00329">
    <property type="entry name" value="Complex1_30kDa"/>
    <property type="match status" value="1"/>
</dbReference>
<dbReference type="SUPFAM" id="SSF143243">
    <property type="entry name" value="Nqo5-like"/>
    <property type="match status" value="1"/>
</dbReference>
<dbReference type="PROSITE" id="PS00542">
    <property type="entry name" value="COMPLEX1_30K"/>
    <property type="match status" value="1"/>
</dbReference>
<name>NDHJ_LOTJA</name>
<sequence length="158" mass="18639">MQGRLSAWLVKHGLVHRSLGFDYQGIETLQIKPEDWHSIAVILYVYGYNYLRSQCAYDVSPGGLLASVYHLTRIECGIYQPEEVCIKIFVPRNNPRIPSIFWVWKSADFQERESYDMLGISYDNHPRLKRILMPESWIGWPLRKDYITPNFYEIQDAH</sequence>
<keyword id="KW-0150">Chloroplast</keyword>
<keyword id="KW-0472">Membrane</keyword>
<keyword id="KW-0520">NAD</keyword>
<keyword id="KW-0521">NADP</keyword>
<keyword id="KW-0934">Plastid</keyword>
<keyword id="KW-0618">Plastoquinone</keyword>
<keyword id="KW-0874">Quinone</keyword>
<keyword id="KW-0793">Thylakoid</keyword>
<keyword id="KW-1278">Translocase</keyword>
<keyword id="KW-0813">Transport</keyword>
<organism>
    <name type="scientific">Lotus japonicus</name>
    <name type="common">Lotus corniculatus var. japonicus</name>
    <dbReference type="NCBI Taxonomy" id="34305"/>
    <lineage>
        <taxon>Eukaryota</taxon>
        <taxon>Viridiplantae</taxon>
        <taxon>Streptophyta</taxon>
        <taxon>Embryophyta</taxon>
        <taxon>Tracheophyta</taxon>
        <taxon>Spermatophyta</taxon>
        <taxon>Magnoliopsida</taxon>
        <taxon>eudicotyledons</taxon>
        <taxon>Gunneridae</taxon>
        <taxon>Pentapetalae</taxon>
        <taxon>rosids</taxon>
        <taxon>fabids</taxon>
        <taxon>Fabales</taxon>
        <taxon>Fabaceae</taxon>
        <taxon>Papilionoideae</taxon>
        <taxon>50 kb inversion clade</taxon>
        <taxon>NPAAA clade</taxon>
        <taxon>Hologalegina</taxon>
        <taxon>robinioid clade</taxon>
        <taxon>Loteae</taxon>
        <taxon>Lotus</taxon>
    </lineage>
</organism>
<reference key="1">
    <citation type="journal article" date="2000" name="DNA Res.">
        <title>Complete structure of the chloroplast genome of a legume, Lotus japonicus.</title>
        <authorList>
            <person name="Kato T."/>
            <person name="Kaneko T."/>
            <person name="Sato S."/>
            <person name="Nakamura Y."/>
            <person name="Tabata S."/>
        </authorList>
    </citation>
    <scope>NUCLEOTIDE SEQUENCE [LARGE SCALE GENOMIC DNA]</scope>
    <source>
        <strain>cv. Miyakojima MG-20</strain>
    </source>
</reference>
<protein>
    <recommendedName>
        <fullName evidence="1">NAD(P)H-quinone oxidoreductase subunit J, chloroplastic</fullName>
        <ecNumber evidence="1">7.1.1.-</ecNumber>
    </recommendedName>
    <alternativeName>
        <fullName>NAD(P)H dehydrogenase subunit J</fullName>
    </alternativeName>
    <alternativeName>
        <fullName evidence="1">NADH-plastoquinone oxidoreductase subunit J</fullName>
    </alternativeName>
</protein>
<accession>Q9BBT6</accession>
<comment type="function">
    <text evidence="1">NDH shuttles electrons from NAD(P)H:plastoquinone, via FMN and iron-sulfur (Fe-S) centers, to quinones in the photosynthetic chain and possibly in a chloroplast respiratory chain. The immediate electron acceptor for the enzyme in this species is believed to be plastoquinone. Couples the redox reaction to proton translocation, and thus conserves the redox energy in a proton gradient.</text>
</comment>
<comment type="catalytic activity">
    <reaction evidence="1">
        <text>a plastoquinone + NADH + (n+1) H(+)(in) = a plastoquinol + NAD(+) + n H(+)(out)</text>
        <dbReference type="Rhea" id="RHEA:42608"/>
        <dbReference type="Rhea" id="RHEA-COMP:9561"/>
        <dbReference type="Rhea" id="RHEA-COMP:9562"/>
        <dbReference type="ChEBI" id="CHEBI:15378"/>
        <dbReference type="ChEBI" id="CHEBI:17757"/>
        <dbReference type="ChEBI" id="CHEBI:57540"/>
        <dbReference type="ChEBI" id="CHEBI:57945"/>
        <dbReference type="ChEBI" id="CHEBI:62192"/>
    </reaction>
</comment>
<comment type="catalytic activity">
    <reaction evidence="1">
        <text>a plastoquinone + NADPH + (n+1) H(+)(in) = a plastoquinol + NADP(+) + n H(+)(out)</text>
        <dbReference type="Rhea" id="RHEA:42612"/>
        <dbReference type="Rhea" id="RHEA-COMP:9561"/>
        <dbReference type="Rhea" id="RHEA-COMP:9562"/>
        <dbReference type="ChEBI" id="CHEBI:15378"/>
        <dbReference type="ChEBI" id="CHEBI:17757"/>
        <dbReference type="ChEBI" id="CHEBI:57783"/>
        <dbReference type="ChEBI" id="CHEBI:58349"/>
        <dbReference type="ChEBI" id="CHEBI:62192"/>
    </reaction>
</comment>
<comment type="subunit">
    <text evidence="1">NDH is composed of at least 16 different subunits, 5 of which are encoded in the nucleus.</text>
</comment>
<comment type="subcellular location">
    <subcellularLocation>
        <location evidence="1">Plastid</location>
        <location evidence="1">Chloroplast thylakoid membrane</location>
        <topology evidence="1">Peripheral membrane protein</topology>
        <orientation evidence="1">Stromal side</orientation>
    </subcellularLocation>
</comment>
<comment type="similarity">
    <text evidence="1">Belongs to the complex I 30 kDa subunit family.</text>
</comment>
<geneLocation type="chloroplast"/>
<evidence type="ECO:0000255" key="1">
    <source>
        <dbReference type="HAMAP-Rule" id="MF_01357"/>
    </source>
</evidence>